<evidence type="ECO:0000255" key="1">
    <source>
        <dbReference type="HAMAP-Rule" id="MF_00218"/>
    </source>
</evidence>
<gene>
    <name evidence="1" type="primary">hemE</name>
    <name type="ordered locus">SO_0435</name>
</gene>
<sequence>MAELKNDRYLRALLKQPVDMTPVWMMRQAGRYLPEYKATRAQAGDFMSLCKNHELACEVTLQPLRRYELDAAILFSDILTVPDAMGLGLYFEAGEGPRFERPTDTIDAIKKLSIPDPEDELGYVMKAVSTIRRELNGQVPLIGFSGSPWTLATYMVEGGSSKTFEKIKKMAYAEPAALHMLLDKLADSVTLYLNAQVANGAQSLMIFDSWGGALSHTAYREFSLRYMQKIVDGLTRFADGRQVPVTLFTKGGGLWLEAMAETGCDALGLDWTVDIADARRRVGHKVALQGNMDPSMLYAPIPRIEEEVGQILAGYGEGTGHVFNLGHGIHQHVDPEHAGAFIKAVHAQSKQYHK</sequence>
<dbReference type="EC" id="4.1.1.37" evidence="1"/>
<dbReference type="EMBL" id="AE014299">
    <property type="protein sequence ID" value="AAN53517.1"/>
    <property type="molecule type" value="Genomic_DNA"/>
</dbReference>
<dbReference type="RefSeq" id="NP_716072.1">
    <property type="nucleotide sequence ID" value="NC_004347.2"/>
</dbReference>
<dbReference type="RefSeq" id="WP_011070792.1">
    <property type="nucleotide sequence ID" value="NZ_CP053946.1"/>
</dbReference>
<dbReference type="SMR" id="Q8EJM8"/>
<dbReference type="STRING" id="211586.SO_0435"/>
<dbReference type="PaxDb" id="211586-SO_0435"/>
<dbReference type="KEGG" id="son:SO_0435"/>
<dbReference type="PATRIC" id="fig|1028802.3.peg.801"/>
<dbReference type="eggNOG" id="COG0407">
    <property type="taxonomic scope" value="Bacteria"/>
</dbReference>
<dbReference type="HOGENOM" id="CLU_040933_0_0_6"/>
<dbReference type="OrthoDB" id="9806656at2"/>
<dbReference type="PhylomeDB" id="Q8EJM8"/>
<dbReference type="BioCyc" id="SONE211586:G1GMP-417-MONOMER"/>
<dbReference type="UniPathway" id="UPA00251">
    <property type="reaction ID" value="UER00321"/>
</dbReference>
<dbReference type="Proteomes" id="UP000008186">
    <property type="component" value="Chromosome"/>
</dbReference>
<dbReference type="GO" id="GO:0005829">
    <property type="term" value="C:cytosol"/>
    <property type="evidence" value="ECO:0000318"/>
    <property type="project" value="GO_Central"/>
</dbReference>
<dbReference type="GO" id="GO:0004853">
    <property type="term" value="F:uroporphyrinogen decarboxylase activity"/>
    <property type="evidence" value="ECO:0000318"/>
    <property type="project" value="GO_Central"/>
</dbReference>
<dbReference type="GO" id="GO:0006783">
    <property type="term" value="P:heme biosynthetic process"/>
    <property type="evidence" value="ECO:0000318"/>
    <property type="project" value="GO_Central"/>
</dbReference>
<dbReference type="GO" id="GO:0019353">
    <property type="term" value="P:protoporphyrinogen IX biosynthetic process from glutamate"/>
    <property type="evidence" value="ECO:0000318"/>
    <property type="project" value="GO_Central"/>
</dbReference>
<dbReference type="CDD" id="cd00717">
    <property type="entry name" value="URO-D"/>
    <property type="match status" value="1"/>
</dbReference>
<dbReference type="FunFam" id="3.20.20.210:FF:000001">
    <property type="entry name" value="Uroporphyrinogen decarboxylase"/>
    <property type="match status" value="1"/>
</dbReference>
<dbReference type="Gene3D" id="3.20.20.210">
    <property type="match status" value="1"/>
</dbReference>
<dbReference type="HAMAP" id="MF_00218">
    <property type="entry name" value="URO_D"/>
    <property type="match status" value="1"/>
</dbReference>
<dbReference type="InterPro" id="IPR038071">
    <property type="entry name" value="UROD/MetE-like_sf"/>
</dbReference>
<dbReference type="InterPro" id="IPR006361">
    <property type="entry name" value="Uroporphyrinogen_deCO2ase_HemE"/>
</dbReference>
<dbReference type="InterPro" id="IPR000257">
    <property type="entry name" value="Uroporphyrinogen_deCOase"/>
</dbReference>
<dbReference type="NCBIfam" id="TIGR01464">
    <property type="entry name" value="hemE"/>
    <property type="match status" value="1"/>
</dbReference>
<dbReference type="PANTHER" id="PTHR21091">
    <property type="entry name" value="METHYLTETRAHYDROFOLATE:HOMOCYSTEINE METHYLTRANSFERASE RELATED"/>
    <property type="match status" value="1"/>
</dbReference>
<dbReference type="PANTHER" id="PTHR21091:SF169">
    <property type="entry name" value="UROPORPHYRINOGEN DECARBOXYLASE"/>
    <property type="match status" value="1"/>
</dbReference>
<dbReference type="Pfam" id="PF01208">
    <property type="entry name" value="URO-D"/>
    <property type="match status" value="1"/>
</dbReference>
<dbReference type="SUPFAM" id="SSF51726">
    <property type="entry name" value="UROD/MetE-like"/>
    <property type="match status" value="1"/>
</dbReference>
<dbReference type="PROSITE" id="PS00906">
    <property type="entry name" value="UROD_1"/>
    <property type="match status" value="1"/>
</dbReference>
<dbReference type="PROSITE" id="PS00907">
    <property type="entry name" value="UROD_2"/>
    <property type="match status" value="1"/>
</dbReference>
<name>DCUP_SHEON</name>
<accession>Q8EJM8</accession>
<protein>
    <recommendedName>
        <fullName evidence="1">Uroporphyrinogen decarboxylase</fullName>
        <shortName evidence="1">UPD</shortName>
        <shortName evidence="1">URO-D</shortName>
        <ecNumber evidence="1">4.1.1.37</ecNumber>
    </recommendedName>
</protein>
<keyword id="KW-0963">Cytoplasm</keyword>
<keyword id="KW-0210">Decarboxylase</keyword>
<keyword id="KW-0456">Lyase</keyword>
<keyword id="KW-0627">Porphyrin biosynthesis</keyword>
<keyword id="KW-1185">Reference proteome</keyword>
<feature type="chain" id="PRO_0000187637" description="Uroporphyrinogen decarboxylase">
    <location>
        <begin position="1"/>
        <end position="354"/>
    </location>
</feature>
<feature type="binding site" evidence="1">
    <location>
        <begin position="27"/>
        <end position="31"/>
    </location>
    <ligand>
        <name>substrate</name>
    </ligand>
</feature>
<feature type="binding site" evidence="1">
    <location>
        <position position="46"/>
    </location>
    <ligand>
        <name>substrate</name>
    </ligand>
</feature>
<feature type="binding site" evidence="1">
    <location>
        <position position="77"/>
    </location>
    <ligand>
        <name>substrate</name>
    </ligand>
</feature>
<feature type="binding site" evidence="1">
    <location>
        <position position="154"/>
    </location>
    <ligand>
        <name>substrate</name>
    </ligand>
</feature>
<feature type="binding site" evidence="1">
    <location>
        <position position="209"/>
    </location>
    <ligand>
        <name>substrate</name>
    </ligand>
</feature>
<feature type="binding site" evidence="1">
    <location>
        <position position="327"/>
    </location>
    <ligand>
        <name>substrate</name>
    </ligand>
</feature>
<feature type="site" description="Transition state stabilizer" evidence="1">
    <location>
        <position position="77"/>
    </location>
</feature>
<organism>
    <name type="scientific">Shewanella oneidensis (strain ATCC 700550 / JCM 31522 / CIP 106686 / LMG 19005 / NCIMB 14063 / MR-1)</name>
    <dbReference type="NCBI Taxonomy" id="211586"/>
    <lineage>
        <taxon>Bacteria</taxon>
        <taxon>Pseudomonadati</taxon>
        <taxon>Pseudomonadota</taxon>
        <taxon>Gammaproteobacteria</taxon>
        <taxon>Alteromonadales</taxon>
        <taxon>Shewanellaceae</taxon>
        <taxon>Shewanella</taxon>
    </lineage>
</organism>
<proteinExistence type="inferred from homology"/>
<comment type="function">
    <text evidence="1">Catalyzes the decarboxylation of four acetate groups of uroporphyrinogen-III to yield coproporphyrinogen-III.</text>
</comment>
<comment type="catalytic activity">
    <reaction evidence="1">
        <text>uroporphyrinogen III + 4 H(+) = coproporphyrinogen III + 4 CO2</text>
        <dbReference type="Rhea" id="RHEA:19865"/>
        <dbReference type="ChEBI" id="CHEBI:15378"/>
        <dbReference type="ChEBI" id="CHEBI:16526"/>
        <dbReference type="ChEBI" id="CHEBI:57308"/>
        <dbReference type="ChEBI" id="CHEBI:57309"/>
        <dbReference type="EC" id="4.1.1.37"/>
    </reaction>
</comment>
<comment type="pathway">
    <text evidence="1">Porphyrin-containing compound metabolism; protoporphyrin-IX biosynthesis; coproporphyrinogen-III from 5-aminolevulinate: step 4/4.</text>
</comment>
<comment type="subunit">
    <text evidence="1">Homodimer.</text>
</comment>
<comment type="subcellular location">
    <subcellularLocation>
        <location evidence="1">Cytoplasm</location>
    </subcellularLocation>
</comment>
<comment type="similarity">
    <text evidence="1">Belongs to the uroporphyrinogen decarboxylase family.</text>
</comment>
<reference key="1">
    <citation type="journal article" date="2002" name="Nat. Biotechnol.">
        <title>Genome sequence of the dissimilatory metal ion-reducing bacterium Shewanella oneidensis.</title>
        <authorList>
            <person name="Heidelberg J.F."/>
            <person name="Paulsen I.T."/>
            <person name="Nelson K.E."/>
            <person name="Gaidos E.J."/>
            <person name="Nelson W.C."/>
            <person name="Read T.D."/>
            <person name="Eisen J.A."/>
            <person name="Seshadri R."/>
            <person name="Ward N.L."/>
            <person name="Methe B.A."/>
            <person name="Clayton R.A."/>
            <person name="Meyer T."/>
            <person name="Tsapin A."/>
            <person name="Scott J."/>
            <person name="Beanan M.J."/>
            <person name="Brinkac L.M."/>
            <person name="Daugherty S.C."/>
            <person name="DeBoy R.T."/>
            <person name="Dodson R.J."/>
            <person name="Durkin A.S."/>
            <person name="Haft D.H."/>
            <person name="Kolonay J.F."/>
            <person name="Madupu R."/>
            <person name="Peterson J.D."/>
            <person name="Umayam L.A."/>
            <person name="White O."/>
            <person name="Wolf A.M."/>
            <person name="Vamathevan J.J."/>
            <person name="Weidman J.F."/>
            <person name="Impraim M."/>
            <person name="Lee K."/>
            <person name="Berry K.J."/>
            <person name="Lee C."/>
            <person name="Mueller J."/>
            <person name="Khouri H.M."/>
            <person name="Gill J."/>
            <person name="Utterback T.R."/>
            <person name="McDonald L.A."/>
            <person name="Feldblyum T.V."/>
            <person name="Smith H.O."/>
            <person name="Venter J.C."/>
            <person name="Nealson K.H."/>
            <person name="Fraser C.M."/>
        </authorList>
    </citation>
    <scope>NUCLEOTIDE SEQUENCE [LARGE SCALE GENOMIC DNA]</scope>
    <source>
        <strain>ATCC 700550 / JCM 31522 / CIP 106686 / LMG 19005 / NCIMB 14063 / MR-1</strain>
    </source>
</reference>